<comment type="function">
    <text evidence="1">Specifically methylates the cytosine at position 1407 (m5C1407) of 16S rRNA.</text>
</comment>
<comment type="catalytic activity">
    <reaction evidence="1">
        <text>cytidine(1407) in 16S rRNA + S-adenosyl-L-methionine = 5-methylcytidine(1407) in 16S rRNA + S-adenosyl-L-homocysteine + H(+)</text>
        <dbReference type="Rhea" id="RHEA:42756"/>
        <dbReference type="Rhea" id="RHEA-COMP:10223"/>
        <dbReference type="Rhea" id="RHEA-COMP:10224"/>
        <dbReference type="ChEBI" id="CHEBI:15378"/>
        <dbReference type="ChEBI" id="CHEBI:57856"/>
        <dbReference type="ChEBI" id="CHEBI:59789"/>
        <dbReference type="ChEBI" id="CHEBI:74483"/>
        <dbReference type="ChEBI" id="CHEBI:82748"/>
        <dbReference type="EC" id="2.1.1.178"/>
    </reaction>
</comment>
<comment type="subcellular location">
    <subcellularLocation>
        <location evidence="1">Cytoplasm</location>
    </subcellularLocation>
</comment>
<comment type="similarity">
    <text evidence="1">Belongs to the class I-like SAM-binding methyltransferase superfamily. RsmB/NOP family.</text>
</comment>
<comment type="sequence caution" evidence="2">
    <conflict type="erroneous initiation">
        <sequence resource="EMBL-CDS" id="ABP75931"/>
    </conflict>
</comment>
<evidence type="ECO:0000255" key="1">
    <source>
        <dbReference type="HAMAP-Rule" id="MF_01579"/>
    </source>
</evidence>
<evidence type="ECO:0000305" key="2"/>
<accession>A4Y7J8</accession>
<proteinExistence type="inferred from homology"/>
<protein>
    <recommendedName>
        <fullName evidence="1">Ribosomal RNA small subunit methyltransferase F</fullName>
        <ecNumber evidence="1">2.1.1.178</ecNumber>
    </recommendedName>
    <alternativeName>
        <fullName evidence="1">16S rRNA m5C1407 methyltransferase</fullName>
    </alternativeName>
    <alternativeName>
        <fullName evidence="1">rRNA (cytosine-C(5)-)-methyltransferase RsmF</fullName>
    </alternativeName>
</protein>
<feature type="chain" id="PRO_0000382587" description="Ribosomal RNA small subunit methyltransferase F">
    <location>
        <begin position="1"/>
        <end position="486"/>
    </location>
</feature>
<feature type="active site" description="Nucleophile" evidence="1">
    <location>
        <position position="246"/>
    </location>
</feature>
<feature type="binding site" evidence="1">
    <location>
        <begin position="124"/>
        <end position="130"/>
    </location>
    <ligand>
        <name>S-adenosyl-L-methionine</name>
        <dbReference type="ChEBI" id="CHEBI:59789"/>
    </ligand>
</feature>
<feature type="binding site" evidence="1">
    <location>
        <position position="148"/>
    </location>
    <ligand>
        <name>S-adenosyl-L-methionine</name>
        <dbReference type="ChEBI" id="CHEBI:59789"/>
    </ligand>
</feature>
<feature type="binding site" evidence="1">
    <location>
        <position position="175"/>
    </location>
    <ligand>
        <name>S-adenosyl-L-methionine</name>
        <dbReference type="ChEBI" id="CHEBI:59789"/>
    </ligand>
</feature>
<feature type="binding site" evidence="1">
    <location>
        <position position="193"/>
    </location>
    <ligand>
        <name>S-adenosyl-L-methionine</name>
        <dbReference type="ChEBI" id="CHEBI:59789"/>
    </ligand>
</feature>
<dbReference type="EC" id="2.1.1.178" evidence="1"/>
<dbReference type="EMBL" id="CP000681">
    <property type="protein sequence ID" value="ABP75931.1"/>
    <property type="status" value="ALT_INIT"/>
    <property type="molecule type" value="Genomic_DNA"/>
</dbReference>
<dbReference type="SMR" id="A4Y7J8"/>
<dbReference type="STRING" id="319224.Sputcn32_2210"/>
<dbReference type="KEGG" id="spc:Sputcn32_2210"/>
<dbReference type="eggNOG" id="COG0144">
    <property type="taxonomic scope" value="Bacteria"/>
</dbReference>
<dbReference type="eggNOG" id="COG3270">
    <property type="taxonomic scope" value="Bacteria"/>
</dbReference>
<dbReference type="HOGENOM" id="CLU_005316_6_2_6"/>
<dbReference type="GO" id="GO:0005737">
    <property type="term" value="C:cytoplasm"/>
    <property type="evidence" value="ECO:0007669"/>
    <property type="project" value="UniProtKB-SubCell"/>
</dbReference>
<dbReference type="GO" id="GO:0003723">
    <property type="term" value="F:RNA binding"/>
    <property type="evidence" value="ECO:0007669"/>
    <property type="project" value="UniProtKB-KW"/>
</dbReference>
<dbReference type="GO" id="GO:0009383">
    <property type="term" value="F:rRNA (cytosine-C5-)-methyltransferase activity"/>
    <property type="evidence" value="ECO:0007669"/>
    <property type="project" value="TreeGrafter"/>
</dbReference>
<dbReference type="GO" id="GO:0070475">
    <property type="term" value="P:rRNA base methylation"/>
    <property type="evidence" value="ECO:0007669"/>
    <property type="project" value="TreeGrafter"/>
</dbReference>
<dbReference type="CDD" id="cd02440">
    <property type="entry name" value="AdoMet_MTases"/>
    <property type="match status" value="1"/>
</dbReference>
<dbReference type="Gene3D" id="3.10.450.720">
    <property type="match status" value="1"/>
</dbReference>
<dbReference type="Gene3D" id="3.40.50.150">
    <property type="entry name" value="Vaccinia Virus protein VP39"/>
    <property type="match status" value="1"/>
</dbReference>
<dbReference type="HAMAP" id="MF_01579">
    <property type="entry name" value="16SrRNA_methyltr_F"/>
    <property type="match status" value="1"/>
</dbReference>
<dbReference type="InterPro" id="IPR031341">
    <property type="entry name" value="Methyltr_RsmF_N"/>
</dbReference>
<dbReference type="InterPro" id="IPR049560">
    <property type="entry name" value="MeTrfase_RsmB-F_NOP2_cat"/>
</dbReference>
<dbReference type="InterPro" id="IPR001678">
    <property type="entry name" value="MeTrfase_RsmB-F_NOP2_dom"/>
</dbReference>
<dbReference type="InterPro" id="IPR027391">
    <property type="entry name" value="Nol1_Nop2_Fmu_2"/>
</dbReference>
<dbReference type="InterPro" id="IPR011023">
    <property type="entry name" value="Nop2p"/>
</dbReference>
<dbReference type="InterPro" id="IPR023267">
    <property type="entry name" value="RCMT"/>
</dbReference>
<dbReference type="InterPro" id="IPR023545">
    <property type="entry name" value="rRNA_ssu_MeTfrase_F"/>
</dbReference>
<dbReference type="InterPro" id="IPR029063">
    <property type="entry name" value="SAM-dependent_MTases_sf"/>
</dbReference>
<dbReference type="InterPro" id="IPR048457">
    <property type="entry name" value="YebU_pre-PUA_dom"/>
</dbReference>
<dbReference type="NCBIfam" id="TIGR00446">
    <property type="entry name" value="nop2p"/>
    <property type="match status" value="1"/>
</dbReference>
<dbReference type="NCBIfam" id="NF008898">
    <property type="entry name" value="PRK11933.1"/>
    <property type="match status" value="1"/>
</dbReference>
<dbReference type="PANTHER" id="PTHR22807:SF30">
    <property type="entry name" value="28S RRNA (CYTOSINE(4447)-C(5))-METHYLTRANSFERASE-RELATED"/>
    <property type="match status" value="1"/>
</dbReference>
<dbReference type="PANTHER" id="PTHR22807">
    <property type="entry name" value="NOP2 YEAST -RELATED NOL1/NOP2/FMU SUN DOMAIN-CONTAINING"/>
    <property type="match status" value="1"/>
</dbReference>
<dbReference type="Pfam" id="PF01189">
    <property type="entry name" value="Methyltr_RsmB-F"/>
    <property type="match status" value="1"/>
</dbReference>
<dbReference type="Pfam" id="PF17125">
    <property type="entry name" value="Methyltr_RsmF_N"/>
    <property type="match status" value="1"/>
</dbReference>
<dbReference type="Pfam" id="PF13636">
    <property type="entry name" value="Methyltranf_PUA"/>
    <property type="match status" value="1"/>
</dbReference>
<dbReference type="Pfam" id="PF21150">
    <property type="entry name" value="YebU_pre-PUA_dom"/>
    <property type="match status" value="1"/>
</dbReference>
<dbReference type="PRINTS" id="PR02008">
    <property type="entry name" value="RCMTFAMILY"/>
</dbReference>
<dbReference type="SUPFAM" id="SSF53335">
    <property type="entry name" value="S-adenosyl-L-methionine-dependent methyltransferases"/>
    <property type="match status" value="1"/>
</dbReference>
<dbReference type="PROSITE" id="PS51686">
    <property type="entry name" value="SAM_MT_RSMB_NOP"/>
    <property type="match status" value="1"/>
</dbReference>
<gene>
    <name evidence="1" type="primary">rsmF</name>
    <name type="ordered locus">Sputcn32_2210</name>
</gene>
<sequence>MAQLNQNFIDTITQELPAHLSMDDFIAACDRPLRRSIRVNTLKISADDFKTLMQPKGWTFDPIPWCKDGFWISYDEEEQLGNALEHIQGLFYIQEASSMLPPTALFTPSAFTPSAKWQCVLDLASAPGSKTTQIAALMHNSGLLIANEYSASRVKVLHANVLRMGASHCALTHFDGRVFGEYLYESFDAVLIDAPCGGEGTVRKDADALKHWSLNDVLAISETQKALIESAFLALKPGGSLVYSTCTLNRLENQGVCEYLKQTYGDAVQFESLSDLFEGAERATTPEGFLHVWPQIYDSEGFFVAKLTKTASVPRLQPEPTLQKNFPFTPATTKQAQGIKDYFQQDLGISLPDDLIMVRDDEFWLFPHEFRDFIGRMRFQRIGIKLADSTKHGFKVRHEAIIALAGKQLSPTAKTVDLSDVEAKEYLMGRDISLNTAVKAQGEVIVCYGGAPLGMAKHLGNRLKNNLPRDLVKDKVLLLSEQIKSL</sequence>
<reference key="1">
    <citation type="submission" date="2007-04" db="EMBL/GenBank/DDBJ databases">
        <title>Complete sequence of Shewanella putrefaciens CN-32.</title>
        <authorList>
            <consortium name="US DOE Joint Genome Institute"/>
            <person name="Copeland A."/>
            <person name="Lucas S."/>
            <person name="Lapidus A."/>
            <person name="Barry K."/>
            <person name="Detter J.C."/>
            <person name="Glavina del Rio T."/>
            <person name="Hammon N."/>
            <person name="Israni S."/>
            <person name="Dalin E."/>
            <person name="Tice H."/>
            <person name="Pitluck S."/>
            <person name="Chain P."/>
            <person name="Malfatti S."/>
            <person name="Shin M."/>
            <person name="Vergez L."/>
            <person name="Schmutz J."/>
            <person name="Larimer F."/>
            <person name="Land M."/>
            <person name="Hauser L."/>
            <person name="Kyrpides N."/>
            <person name="Mikhailova N."/>
            <person name="Romine M.F."/>
            <person name="Fredrickson J."/>
            <person name="Tiedje J."/>
            <person name="Richardson P."/>
        </authorList>
    </citation>
    <scope>NUCLEOTIDE SEQUENCE [LARGE SCALE GENOMIC DNA]</scope>
    <source>
        <strain>CN-32 / ATCC BAA-453</strain>
    </source>
</reference>
<keyword id="KW-0963">Cytoplasm</keyword>
<keyword id="KW-0489">Methyltransferase</keyword>
<keyword id="KW-0694">RNA-binding</keyword>
<keyword id="KW-0698">rRNA processing</keyword>
<keyword id="KW-0949">S-adenosyl-L-methionine</keyword>
<keyword id="KW-0808">Transferase</keyword>
<organism>
    <name type="scientific">Shewanella putrefaciens (strain CN-32 / ATCC BAA-453)</name>
    <dbReference type="NCBI Taxonomy" id="319224"/>
    <lineage>
        <taxon>Bacteria</taxon>
        <taxon>Pseudomonadati</taxon>
        <taxon>Pseudomonadota</taxon>
        <taxon>Gammaproteobacteria</taxon>
        <taxon>Alteromonadales</taxon>
        <taxon>Shewanellaceae</taxon>
        <taxon>Shewanella</taxon>
    </lineage>
</organism>
<name>RSMF_SHEPC</name>